<accession>B9MQ16</accession>
<dbReference type="EMBL" id="CP001393">
    <property type="protein sequence ID" value="ACM59808.1"/>
    <property type="molecule type" value="Genomic_DNA"/>
</dbReference>
<dbReference type="RefSeq" id="WP_015907250.1">
    <property type="nucleotide sequence ID" value="NC_012034.1"/>
</dbReference>
<dbReference type="SMR" id="B9MQ16"/>
<dbReference type="STRING" id="521460.Athe_0692"/>
<dbReference type="GeneID" id="31772044"/>
<dbReference type="KEGG" id="ate:Athe_0692"/>
<dbReference type="eggNOG" id="COG3679">
    <property type="taxonomic scope" value="Bacteria"/>
</dbReference>
<dbReference type="HOGENOM" id="CLU_140243_2_0_9"/>
<dbReference type="Proteomes" id="UP000007723">
    <property type="component" value="Chromosome"/>
</dbReference>
<dbReference type="Gene3D" id="1.20.1500.10">
    <property type="entry name" value="YheA/YmcA-like"/>
    <property type="match status" value="1"/>
</dbReference>
<dbReference type="HAMAP" id="MF_01526">
    <property type="entry name" value="UPF0342"/>
    <property type="match status" value="1"/>
</dbReference>
<dbReference type="InterPro" id="IPR010368">
    <property type="entry name" value="Com_YlbF"/>
</dbReference>
<dbReference type="InterPro" id="IPR023378">
    <property type="entry name" value="YheA/YmcA-like_dom_sf"/>
</dbReference>
<dbReference type="Pfam" id="PF06133">
    <property type="entry name" value="Com_YlbF"/>
    <property type="match status" value="1"/>
</dbReference>
<dbReference type="SUPFAM" id="SSF158622">
    <property type="entry name" value="YheA/YmcA-like"/>
    <property type="match status" value="1"/>
</dbReference>
<organism>
    <name type="scientific">Caldicellulosiruptor bescii (strain ATCC BAA-1888 / DSM 6725 / KCTC 15123 / Z-1320)</name>
    <name type="common">Anaerocellum thermophilum</name>
    <dbReference type="NCBI Taxonomy" id="521460"/>
    <lineage>
        <taxon>Bacteria</taxon>
        <taxon>Bacillati</taxon>
        <taxon>Bacillota</taxon>
        <taxon>Bacillota incertae sedis</taxon>
        <taxon>Caldicellulosiruptorales</taxon>
        <taxon>Caldicellulosiruptoraceae</taxon>
        <taxon>Caldicellulosiruptor</taxon>
    </lineage>
</organism>
<name>Y692_CALBD</name>
<sequence>MRNVYDIAYELATALKESNEFKRFKAAKEKIEKDEKLKQMISDFKKKQFELEQKRLKGEEVTSSDVYSLQQLYQIISLNPDIEEYLSAEMMLAKIIADISKIIADSIEFKDELWGFADK</sequence>
<reference key="1">
    <citation type="submission" date="2009-01" db="EMBL/GenBank/DDBJ databases">
        <title>Complete sequence of chromosome of Caldicellulosiruptor becscii DSM 6725.</title>
        <authorList>
            <person name="Lucas S."/>
            <person name="Copeland A."/>
            <person name="Lapidus A."/>
            <person name="Glavina del Rio T."/>
            <person name="Tice H."/>
            <person name="Bruce D."/>
            <person name="Goodwin L."/>
            <person name="Pitluck S."/>
            <person name="Sims D."/>
            <person name="Meincke L."/>
            <person name="Brettin T."/>
            <person name="Detter J.C."/>
            <person name="Han C."/>
            <person name="Larimer F."/>
            <person name="Land M."/>
            <person name="Hauser L."/>
            <person name="Kyrpides N."/>
            <person name="Ovchinnikova G."/>
            <person name="Kataeva I."/>
            <person name="Adams M.W.W."/>
        </authorList>
    </citation>
    <scope>NUCLEOTIDE SEQUENCE [LARGE SCALE GENOMIC DNA]</scope>
    <source>
        <strain>ATCC BAA-1888 / DSM 6725 / KCTC 15123 / Z-1320</strain>
    </source>
</reference>
<evidence type="ECO:0000255" key="1">
    <source>
        <dbReference type="HAMAP-Rule" id="MF_01526"/>
    </source>
</evidence>
<comment type="similarity">
    <text evidence="1">Belongs to the UPF0342 family.</text>
</comment>
<gene>
    <name type="ordered locus">Athe_0692</name>
</gene>
<feature type="chain" id="PRO_1000185135" description="UPF0342 protein Athe_0692">
    <location>
        <begin position="1"/>
        <end position="119"/>
    </location>
</feature>
<protein>
    <recommendedName>
        <fullName evidence="1">UPF0342 protein Athe_0692</fullName>
    </recommendedName>
</protein>
<proteinExistence type="inferred from homology"/>